<comment type="function">
    <text>Occurs in almost all aerobically respiring organisms and serves to protect cells from the toxic effects of hydrogen peroxide.</text>
</comment>
<comment type="catalytic activity">
    <reaction evidence="2">
        <text>2 H2O2 = O2 + 2 H2O</text>
        <dbReference type="Rhea" id="RHEA:20309"/>
        <dbReference type="ChEBI" id="CHEBI:15377"/>
        <dbReference type="ChEBI" id="CHEBI:15379"/>
        <dbReference type="ChEBI" id="CHEBI:16240"/>
        <dbReference type="EC" id="1.11.1.6"/>
    </reaction>
</comment>
<comment type="cofactor">
    <cofactor evidence="1">
        <name>heme</name>
        <dbReference type="ChEBI" id="CHEBI:30413"/>
    </cofactor>
</comment>
<comment type="subunit">
    <text evidence="1">Homotetramer.</text>
</comment>
<comment type="subcellular location">
    <subcellularLocation>
        <location evidence="3">Peroxisome</location>
    </subcellularLocation>
</comment>
<comment type="tissue specificity">
    <text>High levels in green cotyledons, mature leaf, stem and green hypocotyl.</text>
</comment>
<comment type="similarity">
    <text evidence="3">Belongs to the catalase family.</text>
</comment>
<proteinExistence type="evidence at transcript level"/>
<keyword id="KW-0349">Heme</keyword>
<keyword id="KW-0376">Hydrogen peroxide</keyword>
<keyword id="KW-0408">Iron</keyword>
<keyword id="KW-0479">Metal-binding</keyword>
<keyword id="KW-0560">Oxidoreductase</keyword>
<keyword id="KW-0575">Peroxidase</keyword>
<keyword id="KW-0576">Peroxisome</keyword>
<reference key="1">
    <citation type="journal article" date="1997" name="Plant Mol. Biol.">
        <title>cDNA cloning and differential gene expression of three catalases in pumpkin.</title>
        <authorList>
            <person name="Esaka M."/>
            <person name="Yamada N."/>
            <person name="Kitabayashi M."/>
            <person name="Setoguchi Y."/>
            <person name="Tsugeki R."/>
            <person name="Kondo M."/>
            <person name="Nishimura M."/>
        </authorList>
    </citation>
    <scope>NUCLEOTIDE SEQUENCE [MRNA]</scope>
    <source>
        <tissue>Cotyledon</tissue>
    </source>
</reference>
<organism>
    <name type="scientific">Cucurbita pepo</name>
    <name type="common">Vegetable marrow</name>
    <name type="synonym">Summer squash</name>
    <dbReference type="NCBI Taxonomy" id="3663"/>
    <lineage>
        <taxon>Eukaryota</taxon>
        <taxon>Viridiplantae</taxon>
        <taxon>Streptophyta</taxon>
        <taxon>Embryophyta</taxon>
        <taxon>Tracheophyta</taxon>
        <taxon>Spermatophyta</taxon>
        <taxon>Magnoliopsida</taxon>
        <taxon>eudicotyledons</taxon>
        <taxon>Gunneridae</taxon>
        <taxon>Pentapetalae</taxon>
        <taxon>rosids</taxon>
        <taxon>fabids</taxon>
        <taxon>Cucurbitales</taxon>
        <taxon>Cucurbitaceae</taxon>
        <taxon>Cucurbiteae</taxon>
        <taxon>Cucurbita</taxon>
    </lineage>
</organism>
<accession>P48351</accession>
<feature type="chain" id="PRO_0000084936" description="Catalase isozyme 2">
    <location>
        <begin position="1"/>
        <end position="492"/>
    </location>
</feature>
<feature type="active site" evidence="2">
    <location>
        <position position="65"/>
    </location>
</feature>
<feature type="active site" evidence="2">
    <location>
        <position position="138"/>
    </location>
</feature>
<feature type="binding site" description="axial binding residue" evidence="1">
    <location>
        <position position="347"/>
    </location>
    <ligand>
        <name>heme</name>
        <dbReference type="ChEBI" id="CHEBI:30413"/>
    </ligand>
    <ligandPart>
        <name>Fe</name>
        <dbReference type="ChEBI" id="CHEBI:18248"/>
    </ligandPart>
</feature>
<evidence type="ECO:0000250" key="1"/>
<evidence type="ECO:0000255" key="2">
    <source>
        <dbReference type="PROSITE-ProRule" id="PRU10013"/>
    </source>
</evidence>
<evidence type="ECO:0000305" key="3"/>
<protein>
    <recommendedName>
        <fullName>Catalase isozyme 2</fullName>
        <ecNumber>1.11.1.6</ecNumber>
    </recommendedName>
</protein>
<gene>
    <name type="primary">CAT2</name>
</gene>
<sequence length="492" mass="56953">MDPYKYRPSSAYNTPFCTTNSGAPIWNNTAVMSVGERGPILLEDYQLIEKIATFTRERIPERVVHARGASAKGFFEVTHDVSDLSCADFLRAPGVQTPVIVRFSTVIHERVSPETVRDPRGFAVKFYTREGNFDLVGNNFPVFFVRDAMQFPDVIRAFKPNPKSHLQESWRFLDFCSYHPESLLSFAWFYDDVGIPINYRHMEGFGVQAYSLINKAGKARLVKFHWKPTCGVKSMLEEEAIRVGGSNHSHATQDLYESIAAGNFPEWRLYIQTIDYEDQNNYDFEPLDTTIAWPEDVVPLRPVGRLVLNKNIDNFFAENEMLAFSMSLVPGIHYSDDKMLQARSFAYADTQRHRLGPNYLQLPVNAPKCPHHNNHHEGFMNFMHRDEEVNYFPSRYDACRHAEKYPMPPNVLSGKRERCVIPKENHNFKQAGDRYRSWAPDRQERFVNRFVEALSDSKVTHEVRNIWISYWTQADRSLGQKIASRMNARPNM</sequence>
<name>CATA2_CUCPE</name>
<dbReference type="EC" id="1.11.1.6"/>
<dbReference type="EMBL" id="D55646">
    <property type="protein sequence ID" value="BAA09507.1"/>
    <property type="molecule type" value="mRNA"/>
</dbReference>
<dbReference type="PIR" id="T09754">
    <property type="entry name" value="T09754"/>
</dbReference>
<dbReference type="SMR" id="P48351"/>
<dbReference type="GO" id="GO:0005777">
    <property type="term" value="C:peroxisome"/>
    <property type="evidence" value="ECO:0007669"/>
    <property type="project" value="UniProtKB-SubCell"/>
</dbReference>
<dbReference type="GO" id="GO:0005886">
    <property type="term" value="C:plasma membrane"/>
    <property type="evidence" value="ECO:0007669"/>
    <property type="project" value="TreeGrafter"/>
</dbReference>
<dbReference type="GO" id="GO:0004096">
    <property type="term" value="F:catalase activity"/>
    <property type="evidence" value="ECO:0007669"/>
    <property type="project" value="UniProtKB-EC"/>
</dbReference>
<dbReference type="GO" id="GO:0020037">
    <property type="term" value="F:heme binding"/>
    <property type="evidence" value="ECO:0007669"/>
    <property type="project" value="InterPro"/>
</dbReference>
<dbReference type="GO" id="GO:0046872">
    <property type="term" value="F:metal ion binding"/>
    <property type="evidence" value="ECO:0007669"/>
    <property type="project" value="UniProtKB-KW"/>
</dbReference>
<dbReference type="GO" id="GO:0042744">
    <property type="term" value="P:hydrogen peroxide catabolic process"/>
    <property type="evidence" value="ECO:0007669"/>
    <property type="project" value="UniProtKB-KW"/>
</dbReference>
<dbReference type="GO" id="GO:0042542">
    <property type="term" value="P:response to hydrogen peroxide"/>
    <property type="evidence" value="ECO:0007669"/>
    <property type="project" value="TreeGrafter"/>
</dbReference>
<dbReference type="CDD" id="cd08154">
    <property type="entry name" value="catalase_clade_1"/>
    <property type="match status" value="1"/>
</dbReference>
<dbReference type="FunFam" id="2.40.180.10:FF:000002">
    <property type="entry name" value="Catalase"/>
    <property type="match status" value="1"/>
</dbReference>
<dbReference type="Gene3D" id="2.40.180.10">
    <property type="entry name" value="Catalase core domain"/>
    <property type="match status" value="1"/>
</dbReference>
<dbReference type="InterPro" id="IPR018028">
    <property type="entry name" value="Catalase"/>
</dbReference>
<dbReference type="InterPro" id="IPR024708">
    <property type="entry name" value="Catalase_AS"/>
</dbReference>
<dbReference type="InterPro" id="IPR024711">
    <property type="entry name" value="Catalase_clade1/3"/>
</dbReference>
<dbReference type="InterPro" id="IPR011614">
    <property type="entry name" value="Catalase_core"/>
</dbReference>
<dbReference type="InterPro" id="IPR002226">
    <property type="entry name" value="Catalase_haem_BS"/>
</dbReference>
<dbReference type="InterPro" id="IPR010582">
    <property type="entry name" value="Catalase_immune_responsive"/>
</dbReference>
<dbReference type="InterPro" id="IPR020835">
    <property type="entry name" value="Catalase_sf"/>
</dbReference>
<dbReference type="PANTHER" id="PTHR11465">
    <property type="entry name" value="CATALASE"/>
    <property type="match status" value="1"/>
</dbReference>
<dbReference type="PANTHER" id="PTHR11465:SF49">
    <property type="entry name" value="CATALASE"/>
    <property type="match status" value="1"/>
</dbReference>
<dbReference type="Pfam" id="PF00199">
    <property type="entry name" value="Catalase"/>
    <property type="match status" value="1"/>
</dbReference>
<dbReference type="Pfam" id="PF06628">
    <property type="entry name" value="Catalase-rel"/>
    <property type="match status" value="1"/>
</dbReference>
<dbReference type="PIRSF" id="PIRSF038928">
    <property type="entry name" value="Catalase_clade1-3"/>
    <property type="match status" value="1"/>
</dbReference>
<dbReference type="PRINTS" id="PR00067">
    <property type="entry name" value="CATALASE"/>
</dbReference>
<dbReference type="SMART" id="SM01060">
    <property type="entry name" value="Catalase"/>
    <property type="match status" value="1"/>
</dbReference>
<dbReference type="SUPFAM" id="SSF56634">
    <property type="entry name" value="Heme-dependent catalase-like"/>
    <property type="match status" value="1"/>
</dbReference>
<dbReference type="PROSITE" id="PS00437">
    <property type="entry name" value="CATALASE_1"/>
    <property type="match status" value="1"/>
</dbReference>
<dbReference type="PROSITE" id="PS00438">
    <property type="entry name" value="CATALASE_2"/>
    <property type="match status" value="1"/>
</dbReference>
<dbReference type="PROSITE" id="PS51402">
    <property type="entry name" value="CATALASE_3"/>
    <property type="match status" value="1"/>
</dbReference>